<comment type="function">
    <text evidence="1">Single strand-specific metallo-endoribonuclease involved in late-stage 70S ribosome quality control and in maturation of the 3' terminus of the 16S rRNA.</text>
</comment>
<comment type="cofactor">
    <cofactor evidence="1">
        <name>Zn(2+)</name>
        <dbReference type="ChEBI" id="CHEBI:29105"/>
    </cofactor>
    <text evidence="1">Binds 1 zinc ion.</text>
</comment>
<comment type="subcellular location">
    <subcellularLocation>
        <location evidence="1">Cytoplasm</location>
    </subcellularLocation>
</comment>
<comment type="similarity">
    <text evidence="1">Belongs to the endoribonuclease YbeY family.</text>
</comment>
<organism>
    <name type="scientific">Streptococcus sanguinis (strain SK36)</name>
    <dbReference type="NCBI Taxonomy" id="388919"/>
    <lineage>
        <taxon>Bacteria</taxon>
        <taxon>Bacillati</taxon>
        <taxon>Bacillota</taxon>
        <taxon>Bacilli</taxon>
        <taxon>Lactobacillales</taxon>
        <taxon>Streptococcaceae</taxon>
        <taxon>Streptococcus</taxon>
    </lineage>
</organism>
<keyword id="KW-0963">Cytoplasm</keyword>
<keyword id="KW-0255">Endonuclease</keyword>
<keyword id="KW-0378">Hydrolase</keyword>
<keyword id="KW-0479">Metal-binding</keyword>
<keyword id="KW-0540">Nuclease</keyword>
<keyword id="KW-1185">Reference proteome</keyword>
<keyword id="KW-0690">Ribosome biogenesis</keyword>
<keyword id="KW-0698">rRNA processing</keyword>
<keyword id="KW-0862">Zinc</keyword>
<sequence length="165" mass="19163">MYIEMVDETGQVSEEILKQTQEILEFAAQKTGKENKEMAVTFVSNERSHELNLEYRDTDRPTDVISLEYKPELDIAVDEEDLLDHPELAEMLEDFDAYIGELFISVDKAREQAEEYGHSFEREMGFLAVHGFLHINGYDHYTPEEEAEMFGLQEEILTAYGLTRK</sequence>
<name>YBEY_STRSV</name>
<proteinExistence type="inferred from homology"/>
<gene>
    <name evidence="1" type="primary">ybeY</name>
    <name type="ordered locus">SSA_1613</name>
</gene>
<evidence type="ECO:0000255" key="1">
    <source>
        <dbReference type="HAMAP-Rule" id="MF_00009"/>
    </source>
</evidence>
<feature type="chain" id="PRO_1000000749" description="Endoribonuclease YbeY">
    <location>
        <begin position="1"/>
        <end position="165"/>
    </location>
</feature>
<feature type="binding site" evidence="1">
    <location>
        <position position="130"/>
    </location>
    <ligand>
        <name>Zn(2+)</name>
        <dbReference type="ChEBI" id="CHEBI:29105"/>
        <note>catalytic</note>
    </ligand>
</feature>
<feature type="binding site" evidence="1">
    <location>
        <position position="134"/>
    </location>
    <ligand>
        <name>Zn(2+)</name>
        <dbReference type="ChEBI" id="CHEBI:29105"/>
        <note>catalytic</note>
    </ligand>
</feature>
<feature type="binding site" evidence="1">
    <location>
        <position position="140"/>
    </location>
    <ligand>
        <name>Zn(2+)</name>
        <dbReference type="ChEBI" id="CHEBI:29105"/>
        <note>catalytic</note>
    </ligand>
</feature>
<dbReference type="EC" id="3.1.-.-" evidence="1"/>
<dbReference type="EMBL" id="CP000387">
    <property type="protein sequence ID" value="ABN45001.1"/>
    <property type="molecule type" value="Genomic_DNA"/>
</dbReference>
<dbReference type="RefSeq" id="WP_011837247.1">
    <property type="nucleotide sequence ID" value="NC_009009.1"/>
</dbReference>
<dbReference type="RefSeq" id="YP_001035551.1">
    <property type="nucleotide sequence ID" value="NC_009009.1"/>
</dbReference>
<dbReference type="SMR" id="A3CP96"/>
<dbReference type="STRING" id="388919.SSA_1613"/>
<dbReference type="KEGG" id="ssa:SSA_1613"/>
<dbReference type="PATRIC" id="fig|388919.9.peg.1531"/>
<dbReference type="eggNOG" id="COG0319">
    <property type="taxonomic scope" value="Bacteria"/>
</dbReference>
<dbReference type="HOGENOM" id="CLU_106710_3_0_9"/>
<dbReference type="OrthoDB" id="9807740at2"/>
<dbReference type="Proteomes" id="UP000002148">
    <property type="component" value="Chromosome"/>
</dbReference>
<dbReference type="GO" id="GO:0005737">
    <property type="term" value="C:cytoplasm"/>
    <property type="evidence" value="ECO:0007669"/>
    <property type="project" value="UniProtKB-SubCell"/>
</dbReference>
<dbReference type="GO" id="GO:0004222">
    <property type="term" value="F:metalloendopeptidase activity"/>
    <property type="evidence" value="ECO:0007669"/>
    <property type="project" value="InterPro"/>
</dbReference>
<dbReference type="GO" id="GO:0004521">
    <property type="term" value="F:RNA endonuclease activity"/>
    <property type="evidence" value="ECO:0007669"/>
    <property type="project" value="UniProtKB-UniRule"/>
</dbReference>
<dbReference type="GO" id="GO:0008270">
    <property type="term" value="F:zinc ion binding"/>
    <property type="evidence" value="ECO:0007669"/>
    <property type="project" value="UniProtKB-UniRule"/>
</dbReference>
<dbReference type="GO" id="GO:0006364">
    <property type="term" value="P:rRNA processing"/>
    <property type="evidence" value="ECO:0007669"/>
    <property type="project" value="UniProtKB-UniRule"/>
</dbReference>
<dbReference type="Gene3D" id="3.40.390.30">
    <property type="entry name" value="Metalloproteases ('zincins'), catalytic domain"/>
    <property type="match status" value="1"/>
</dbReference>
<dbReference type="HAMAP" id="MF_00009">
    <property type="entry name" value="Endoribonucl_YbeY"/>
    <property type="match status" value="1"/>
</dbReference>
<dbReference type="InterPro" id="IPR023091">
    <property type="entry name" value="MetalPrtase_cat_dom_sf_prd"/>
</dbReference>
<dbReference type="InterPro" id="IPR002036">
    <property type="entry name" value="YbeY"/>
</dbReference>
<dbReference type="InterPro" id="IPR020549">
    <property type="entry name" value="YbeY_CS"/>
</dbReference>
<dbReference type="NCBIfam" id="TIGR00043">
    <property type="entry name" value="rRNA maturation RNase YbeY"/>
    <property type="match status" value="1"/>
</dbReference>
<dbReference type="PANTHER" id="PTHR46986">
    <property type="entry name" value="ENDORIBONUCLEASE YBEY, CHLOROPLASTIC"/>
    <property type="match status" value="1"/>
</dbReference>
<dbReference type="PANTHER" id="PTHR46986:SF1">
    <property type="entry name" value="ENDORIBONUCLEASE YBEY, CHLOROPLASTIC"/>
    <property type="match status" value="1"/>
</dbReference>
<dbReference type="Pfam" id="PF02130">
    <property type="entry name" value="YbeY"/>
    <property type="match status" value="1"/>
</dbReference>
<dbReference type="SUPFAM" id="SSF55486">
    <property type="entry name" value="Metalloproteases ('zincins'), catalytic domain"/>
    <property type="match status" value="1"/>
</dbReference>
<dbReference type="PROSITE" id="PS01306">
    <property type="entry name" value="UPF0054"/>
    <property type="match status" value="1"/>
</dbReference>
<protein>
    <recommendedName>
        <fullName evidence="1">Endoribonuclease YbeY</fullName>
        <ecNumber evidence="1">3.1.-.-</ecNumber>
    </recommendedName>
</protein>
<reference key="1">
    <citation type="journal article" date="2007" name="J. Bacteriol.">
        <title>Genome of the opportunistic pathogen Streptococcus sanguinis.</title>
        <authorList>
            <person name="Xu P."/>
            <person name="Alves J.M."/>
            <person name="Kitten T."/>
            <person name="Brown A."/>
            <person name="Chen Z."/>
            <person name="Ozaki L.S."/>
            <person name="Manque P."/>
            <person name="Ge X."/>
            <person name="Serrano M.G."/>
            <person name="Puiu D."/>
            <person name="Hendricks S."/>
            <person name="Wang Y."/>
            <person name="Chaplin M.D."/>
            <person name="Akan D."/>
            <person name="Paik S."/>
            <person name="Peterson D.L."/>
            <person name="Macrina F.L."/>
            <person name="Buck G.A."/>
        </authorList>
    </citation>
    <scope>NUCLEOTIDE SEQUENCE [LARGE SCALE GENOMIC DNA]</scope>
    <source>
        <strain>SK36</strain>
    </source>
</reference>
<accession>A3CP96</accession>